<name>TIG_AZOVD</name>
<dbReference type="EC" id="5.2.1.8" evidence="1"/>
<dbReference type="EMBL" id="CP001157">
    <property type="protein sequence ID" value="ACO78543.1"/>
    <property type="molecule type" value="Genomic_DNA"/>
</dbReference>
<dbReference type="RefSeq" id="WP_012700941.1">
    <property type="nucleotide sequence ID" value="NC_012560.1"/>
</dbReference>
<dbReference type="SMR" id="C1DHE8"/>
<dbReference type="STRING" id="322710.Avin_23550"/>
<dbReference type="EnsemblBacteria" id="ACO78543">
    <property type="protein sequence ID" value="ACO78543"/>
    <property type="gene ID" value="Avin_23550"/>
</dbReference>
<dbReference type="GeneID" id="88185542"/>
<dbReference type="KEGG" id="avn:Avin_23550"/>
<dbReference type="eggNOG" id="COG0544">
    <property type="taxonomic scope" value="Bacteria"/>
</dbReference>
<dbReference type="HOGENOM" id="CLU_033058_2_0_6"/>
<dbReference type="OrthoDB" id="9767721at2"/>
<dbReference type="Proteomes" id="UP000002424">
    <property type="component" value="Chromosome"/>
</dbReference>
<dbReference type="GO" id="GO:0005737">
    <property type="term" value="C:cytoplasm"/>
    <property type="evidence" value="ECO:0007669"/>
    <property type="project" value="UniProtKB-SubCell"/>
</dbReference>
<dbReference type="GO" id="GO:0003755">
    <property type="term" value="F:peptidyl-prolyl cis-trans isomerase activity"/>
    <property type="evidence" value="ECO:0007669"/>
    <property type="project" value="UniProtKB-UniRule"/>
</dbReference>
<dbReference type="GO" id="GO:0044183">
    <property type="term" value="F:protein folding chaperone"/>
    <property type="evidence" value="ECO:0007669"/>
    <property type="project" value="TreeGrafter"/>
</dbReference>
<dbReference type="GO" id="GO:0043022">
    <property type="term" value="F:ribosome binding"/>
    <property type="evidence" value="ECO:0007669"/>
    <property type="project" value="TreeGrafter"/>
</dbReference>
<dbReference type="GO" id="GO:0051083">
    <property type="term" value="P:'de novo' cotranslational protein folding"/>
    <property type="evidence" value="ECO:0007669"/>
    <property type="project" value="TreeGrafter"/>
</dbReference>
<dbReference type="GO" id="GO:0051301">
    <property type="term" value="P:cell division"/>
    <property type="evidence" value="ECO:0007669"/>
    <property type="project" value="UniProtKB-KW"/>
</dbReference>
<dbReference type="GO" id="GO:0061077">
    <property type="term" value="P:chaperone-mediated protein folding"/>
    <property type="evidence" value="ECO:0007669"/>
    <property type="project" value="TreeGrafter"/>
</dbReference>
<dbReference type="GO" id="GO:0015031">
    <property type="term" value="P:protein transport"/>
    <property type="evidence" value="ECO:0007669"/>
    <property type="project" value="UniProtKB-UniRule"/>
</dbReference>
<dbReference type="GO" id="GO:0043335">
    <property type="term" value="P:protein unfolding"/>
    <property type="evidence" value="ECO:0007669"/>
    <property type="project" value="TreeGrafter"/>
</dbReference>
<dbReference type="FunFam" id="3.10.50.40:FF:000001">
    <property type="entry name" value="Trigger factor"/>
    <property type="match status" value="1"/>
</dbReference>
<dbReference type="FunFam" id="3.30.70.1050:FF:000001">
    <property type="entry name" value="Trigger factor"/>
    <property type="match status" value="1"/>
</dbReference>
<dbReference type="Gene3D" id="3.10.50.40">
    <property type="match status" value="1"/>
</dbReference>
<dbReference type="Gene3D" id="3.30.70.1050">
    <property type="entry name" value="Trigger factor ribosome-binding domain"/>
    <property type="match status" value="1"/>
</dbReference>
<dbReference type="Gene3D" id="1.10.3120.10">
    <property type="entry name" value="Trigger factor, C-terminal domain"/>
    <property type="match status" value="1"/>
</dbReference>
<dbReference type="HAMAP" id="MF_00303">
    <property type="entry name" value="Trigger_factor_Tig"/>
    <property type="match status" value="1"/>
</dbReference>
<dbReference type="InterPro" id="IPR046357">
    <property type="entry name" value="PPIase_dom_sf"/>
</dbReference>
<dbReference type="InterPro" id="IPR001179">
    <property type="entry name" value="PPIase_FKBP_dom"/>
</dbReference>
<dbReference type="InterPro" id="IPR005215">
    <property type="entry name" value="Trig_fac"/>
</dbReference>
<dbReference type="InterPro" id="IPR008880">
    <property type="entry name" value="Trigger_fac_C"/>
</dbReference>
<dbReference type="InterPro" id="IPR037041">
    <property type="entry name" value="Trigger_fac_C_sf"/>
</dbReference>
<dbReference type="InterPro" id="IPR008881">
    <property type="entry name" value="Trigger_fac_ribosome-bd_bac"/>
</dbReference>
<dbReference type="InterPro" id="IPR036611">
    <property type="entry name" value="Trigger_fac_ribosome-bd_sf"/>
</dbReference>
<dbReference type="InterPro" id="IPR027304">
    <property type="entry name" value="Trigger_fact/SurA_dom_sf"/>
</dbReference>
<dbReference type="NCBIfam" id="TIGR00115">
    <property type="entry name" value="tig"/>
    <property type="match status" value="1"/>
</dbReference>
<dbReference type="PANTHER" id="PTHR30560">
    <property type="entry name" value="TRIGGER FACTOR CHAPERONE AND PEPTIDYL-PROLYL CIS/TRANS ISOMERASE"/>
    <property type="match status" value="1"/>
</dbReference>
<dbReference type="PANTHER" id="PTHR30560:SF3">
    <property type="entry name" value="TRIGGER FACTOR-LIKE PROTEIN TIG, CHLOROPLASTIC"/>
    <property type="match status" value="1"/>
</dbReference>
<dbReference type="Pfam" id="PF00254">
    <property type="entry name" value="FKBP_C"/>
    <property type="match status" value="1"/>
</dbReference>
<dbReference type="Pfam" id="PF05698">
    <property type="entry name" value="Trigger_C"/>
    <property type="match status" value="1"/>
</dbReference>
<dbReference type="Pfam" id="PF05697">
    <property type="entry name" value="Trigger_N"/>
    <property type="match status" value="1"/>
</dbReference>
<dbReference type="PIRSF" id="PIRSF003095">
    <property type="entry name" value="Trigger_factor"/>
    <property type="match status" value="1"/>
</dbReference>
<dbReference type="SUPFAM" id="SSF54534">
    <property type="entry name" value="FKBP-like"/>
    <property type="match status" value="1"/>
</dbReference>
<dbReference type="SUPFAM" id="SSF109998">
    <property type="entry name" value="Triger factor/SurA peptide-binding domain-like"/>
    <property type="match status" value="1"/>
</dbReference>
<dbReference type="SUPFAM" id="SSF102735">
    <property type="entry name" value="Trigger factor ribosome-binding domain"/>
    <property type="match status" value="1"/>
</dbReference>
<dbReference type="PROSITE" id="PS50059">
    <property type="entry name" value="FKBP_PPIASE"/>
    <property type="match status" value="1"/>
</dbReference>
<organism>
    <name type="scientific">Azotobacter vinelandii (strain DJ / ATCC BAA-1303)</name>
    <dbReference type="NCBI Taxonomy" id="322710"/>
    <lineage>
        <taxon>Bacteria</taxon>
        <taxon>Pseudomonadati</taxon>
        <taxon>Pseudomonadota</taxon>
        <taxon>Gammaproteobacteria</taxon>
        <taxon>Pseudomonadales</taxon>
        <taxon>Pseudomonadaceae</taxon>
        <taxon>Azotobacter</taxon>
    </lineage>
</organism>
<gene>
    <name evidence="1" type="primary">tig</name>
    <name type="ordered locus">Avin_23550</name>
</gene>
<keyword id="KW-0131">Cell cycle</keyword>
<keyword id="KW-0132">Cell division</keyword>
<keyword id="KW-0143">Chaperone</keyword>
<keyword id="KW-0963">Cytoplasm</keyword>
<keyword id="KW-0413">Isomerase</keyword>
<keyword id="KW-0697">Rotamase</keyword>
<feature type="chain" id="PRO_1000204978" description="Trigger factor">
    <location>
        <begin position="1"/>
        <end position="436"/>
    </location>
</feature>
<feature type="domain" description="PPIase FKBP-type" evidence="1">
    <location>
        <begin position="161"/>
        <end position="246"/>
    </location>
</feature>
<sequence length="436" mass="48191">MQVSVESTSALERRLTIGVPAERIETEVNKRLQQTARRAKIPGFRPGKVPMSVIRQRYEESARQEALGELIQASFYEAVVEQKLKPAGAPSVEPKVFEKGKDLEYVATFEVYPEFEITGLESIAVERLQAEVAESDVDNMLEILRKQNTHYKQVEREARDGDQLNIDFVGKVDGEAFAGGSAKGTLLVLGSGRMIEGFEAGLVGAKAGEERVLSLTFPADYQNLDLAGKAAEFAVTVNSVSEAELPELNADFFSLFGINESSLEAFRAEVGKNMERELRQAIKSKVKTQVMDGLLAANPVEVPKALIENEVNRLRVQAVQQFGGNIKPEQLPADLFQDQAKRRVTLGLIVAEMVKQFDLKPDESKVKTLIEEIASAYQEPEQVVAWYYGNEQQLSEVRSVVLEEQVVDTVLQKANVTDKAVSYEEAVKPAEAPQAA</sequence>
<evidence type="ECO:0000255" key="1">
    <source>
        <dbReference type="HAMAP-Rule" id="MF_00303"/>
    </source>
</evidence>
<protein>
    <recommendedName>
        <fullName evidence="1">Trigger factor</fullName>
        <shortName evidence="1">TF</shortName>
        <ecNumber evidence="1">5.2.1.8</ecNumber>
    </recommendedName>
    <alternativeName>
        <fullName evidence="1">PPIase</fullName>
    </alternativeName>
</protein>
<comment type="function">
    <text evidence="1">Involved in protein export. Acts as a chaperone by maintaining the newly synthesized protein in an open conformation. Functions as a peptidyl-prolyl cis-trans isomerase.</text>
</comment>
<comment type="catalytic activity">
    <reaction evidence="1">
        <text>[protein]-peptidylproline (omega=180) = [protein]-peptidylproline (omega=0)</text>
        <dbReference type="Rhea" id="RHEA:16237"/>
        <dbReference type="Rhea" id="RHEA-COMP:10747"/>
        <dbReference type="Rhea" id="RHEA-COMP:10748"/>
        <dbReference type="ChEBI" id="CHEBI:83833"/>
        <dbReference type="ChEBI" id="CHEBI:83834"/>
        <dbReference type="EC" id="5.2.1.8"/>
    </reaction>
</comment>
<comment type="subcellular location">
    <subcellularLocation>
        <location>Cytoplasm</location>
    </subcellularLocation>
    <text evidence="1">About half TF is bound to the ribosome near the polypeptide exit tunnel while the other half is free in the cytoplasm.</text>
</comment>
<comment type="domain">
    <text evidence="1">Consists of 3 domains; the N-terminus binds the ribosome, the middle domain has PPIase activity, while the C-terminus has intrinsic chaperone activity on its own.</text>
</comment>
<comment type="similarity">
    <text evidence="1">Belongs to the FKBP-type PPIase family. Tig subfamily.</text>
</comment>
<proteinExistence type="inferred from homology"/>
<accession>C1DHE8</accession>
<reference key="1">
    <citation type="journal article" date="2009" name="J. Bacteriol.">
        <title>Genome sequence of Azotobacter vinelandii, an obligate aerobe specialized to support diverse anaerobic metabolic processes.</title>
        <authorList>
            <person name="Setubal J.C."/>
            <person name="Dos Santos P."/>
            <person name="Goldman B.S."/>
            <person name="Ertesvaag H."/>
            <person name="Espin G."/>
            <person name="Rubio L.M."/>
            <person name="Valla S."/>
            <person name="Almeida N.F."/>
            <person name="Balasubramanian D."/>
            <person name="Cromes L."/>
            <person name="Curatti L."/>
            <person name="Du Z."/>
            <person name="Godsy E."/>
            <person name="Goodner B."/>
            <person name="Hellner-Burris K."/>
            <person name="Hernandez J.A."/>
            <person name="Houmiel K."/>
            <person name="Imperial J."/>
            <person name="Kennedy C."/>
            <person name="Larson T.J."/>
            <person name="Latreille P."/>
            <person name="Ligon L.S."/>
            <person name="Lu J."/>
            <person name="Maerk M."/>
            <person name="Miller N.M."/>
            <person name="Norton S."/>
            <person name="O'Carroll I.P."/>
            <person name="Paulsen I."/>
            <person name="Raulfs E.C."/>
            <person name="Roemer R."/>
            <person name="Rosser J."/>
            <person name="Segura D."/>
            <person name="Slater S."/>
            <person name="Stricklin S.L."/>
            <person name="Studholme D.J."/>
            <person name="Sun J."/>
            <person name="Viana C.J."/>
            <person name="Wallin E."/>
            <person name="Wang B."/>
            <person name="Wheeler C."/>
            <person name="Zhu H."/>
            <person name="Dean D.R."/>
            <person name="Dixon R."/>
            <person name="Wood D."/>
        </authorList>
    </citation>
    <scope>NUCLEOTIDE SEQUENCE [LARGE SCALE GENOMIC DNA]</scope>
    <source>
        <strain>DJ / ATCC BAA-1303</strain>
    </source>
</reference>